<protein>
    <recommendedName>
        <fullName evidence="1">Thiosulfate sulfurtransferase GlpE</fullName>
        <ecNumber evidence="1">2.8.1.1</ecNumber>
    </recommendedName>
</protein>
<evidence type="ECO:0000255" key="1">
    <source>
        <dbReference type="HAMAP-Rule" id="MF_01009"/>
    </source>
</evidence>
<proteinExistence type="inferred from homology"/>
<accession>A9R4D5</accession>
<organism>
    <name type="scientific">Yersinia pestis bv. Antiqua (strain Angola)</name>
    <dbReference type="NCBI Taxonomy" id="349746"/>
    <lineage>
        <taxon>Bacteria</taxon>
        <taxon>Pseudomonadati</taxon>
        <taxon>Pseudomonadota</taxon>
        <taxon>Gammaproteobacteria</taxon>
        <taxon>Enterobacterales</taxon>
        <taxon>Yersiniaceae</taxon>
        <taxon>Yersinia</taxon>
    </lineage>
</organism>
<name>GLPE_YERPG</name>
<sequence length="109" mass="12316">MEQFEAISVEQAYLRWKEGKTALVDIRDPQSYEAGHAPGAFHLTNSSLHTFMQQTDFDQPVMVMCYHGNSSKGAAQYLLQQGFDVVYSIDGGFEAWARSYPQDITSESR</sequence>
<dbReference type="EC" id="2.8.1.1" evidence="1"/>
<dbReference type="EMBL" id="CP000901">
    <property type="protein sequence ID" value="ABX86389.1"/>
    <property type="molecule type" value="Genomic_DNA"/>
</dbReference>
<dbReference type="RefSeq" id="WP_002218928.1">
    <property type="nucleotide sequence ID" value="NZ_CP009935.1"/>
</dbReference>
<dbReference type="SMR" id="A9R4D5"/>
<dbReference type="KEGG" id="ypg:YpAngola_A3755"/>
<dbReference type="PATRIC" id="fig|349746.12.peg.463"/>
<dbReference type="GO" id="GO:0005737">
    <property type="term" value="C:cytoplasm"/>
    <property type="evidence" value="ECO:0007669"/>
    <property type="project" value="UniProtKB-SubCell"/>
</dbReference>
<dbReference type="GO" id="GO:0004792">
    <property type="term" value="F:thiosulfate-cyanide sulfurtransferase activity"/>
    <property type="evidence" value="ECO:0007669"/>
    <property type="project" value="UniProtKB-UniRule"/>
</dbReference>
<dbReference type="GO" id="GO:0006071">
    <property type="term" value="P:glycerol metabolic process"/>
    <property type="evidence" value="ECO:0007669"/>
    <property type="project" value="UniProtKB-UniRule"/>
</dbReference>
<dbReference type="CDD" id="cd01444">
    <property type="entry name" value="GlpE_ST"/>
    <property type="match status" value="1"/>
</dbReference>
<dbReference type="Gene3D" id="3.40.250.10">
    <property type="entry name" value="Rhodanese-like domain"/>
    <property type="match status" value="1"/>
</dbReference>
<dbReference type="HAMAP" id="MF_01009">
    <property type="entry name" value="Thiosulf_sulfurtr"/>
    <property type="match status" value="1"/>
</dbReference>
<dbReference type="InterPro" id="IPR050229">
    <property type="entry name" value="GlpE_sulfurtransferase"/>
</dbReference>
<dbReference type="InterPro" id="IPR001763">
    <property type="entry name" value="Rhodanese-like_dom"/>
</dbReference>
<dbReference type="InterPro" id="IPR036873">
    <property type="entry name" value="Rhodanese-like_dom_sf"/>
</dbReference>
<dbReference type="InterPro" id="IPR023695">
    <property type="entry name" value="Thiosulf_sulfurTrfase"/>
</dbReference>
<dbReference type="NCBIfam" id="NF001195">
    <property type="entry name" value="PRK00162.1"/>
    <property type="match status" value="1"/>
</dbReference>
<dbReference type="PANTHER" id="PTHR43031">
    <property type="entry name" value="FAD-DEPENDENT OXIDOREDUCTASE"/>
    <property type="match status" value="1"/>
</dbReference>
<dbReference type="PANTHER" id="PTHR43031:SF6">
    <property type="entry name" value="THIOSULFATE SULFURTRANSFERASE GLPE"/>
    <property type="match status" value="1"/>
</dbReference>
<dbReference type="Pfam" id="PF00581">
    <property type="entry name" value="Rhodanese"/>
    <property type="match status" value="1"/>
</dbReference>
<dbReference type="SMART" id="SM00450">
    <property type="entry name" value="RHOD"/>
    <property type="match status" value="1"/>
</dbReference>
<dbReference type="SUPFAM" id="SSF52821">
    <property type="entry name" value="Rhodanese/Cell cycle control phosphatase"/>
    <property type="match status" value="1"/>
</dbReference>
<dbReference type="PROSITE" id="PS50206">
    <property type="entry name" value="RHODANESE_3"/>
    <property type="match status" value="1"/>
</dbReference>
<feature type="chain" id="PRO_1000190113" description="Thiosulfate sulfurtransferase GlpE">
    <location>
        <begin position="1"/>
        <end position="109"/>
    </location>
</feature>
<feature type="domain" description="Rhodanese" evidence="1">
    <location>
        <begin position="17"/>
        <end position="105"/>
    </location>
</feature>
<feature type="active site" description="Cysteine persulfide intermediate" evidence="1">
    <location>
        <position position="65"/>
    </location>
</feature>
<reference key="1">
    <citation type="journal article" date="2010" name="J. Bacteriol.">
        <title>Genome sequence of the deep-rooted Yersinia pestis strain Angola reveals new insights into the evolution and pangenome of the plague bacterium.</title>
        <authorList>
            <person name="Eppinger M."/>
            <person name="Worsham P.L."/>
            <person name="Nikolich M.P."/>
            <person name="Riley D.R."/>
            <person name="Sebastian Y."/>
            <person name="Mou S."/>
            <person name="Achtman M."/>
            <person name="Lindler L.E."/>
            <person name="Ravel J."/>
        </authorList>
    </citation>
    <scope>NUCLEOTIDE SEQUENCE [LARGE SCALE GENOMIC DNA]</scope>
    <source>
        <strain>Angola</strain>
    </source>
</reference>
<gene>
    <name evidence="1" type="primary">glpE</name>
    <name type="ordered locus">YpAngola_A3755</name>
</gene>
<comment type="function">
    <text evidence="1">Transferase that catalyzes the transfer of sulfur from thiosulfate to thiophilic acceptors such as cyanide or dithiols. May function in a CysM-independent thiosulfate assimilation pathway by catalyzing the conversion of thiosulfate to sulfite, which can then be used for L-cysteine biosynthesis.</text>
</comment>
<comment type="catalytic activity">
    <reaction evidence="1">
        <text>thiosulfate + hydrogen cyanide = thiocyanate + sulfite + 2 H(+)</text>
        <dbReference type="Rhea" id="RHEA:16881"/>
        <dbReference type="ChEBI" id="CHEBI:15378"/>
        <dbReference type="ChEBI" id="CHEBI:17359"/>
        <dbReference type="ChEBI" id="CHEBI:18022"/>
        <dbReference type="ChEBI" id="CHEBI:18407"/>
        <dbReference type="ChEBI" id="CHEBI:33542"/>
        <dbReference type="EC" id="2.8.1.1"/>
    </reaction>
</comment>
<comment type="catalytic activity">
    <reaction evidence="1">
        <text>thiosulfate + [thioredoxin]-dithiol = [thioredoxin]-disulfide + hydrogen sulfide + sulfite + 2 H(+)</text>
        <dbReference type="Rhea" id="RHEA:83859"/>
        <dbReference type="Rhea" id="RHEA-COMP:10698"/>
        <dbReference type="Rhea" id="RHEA-COMP:10700"/>
        <dbReference type="ChEBI" id="CHEBI:15378"/>
        <dbReference type="ChEBI" id="CHEBI:17359"/>
        <dbReference type="ChEBI" id="CHEBI:29919"/>
        <dbReference type="ChEBI" id="CHEBI:29950"/>
        <dbReference type="ChEBI" id="CHEBI:33542"/>
        <dbReference type="ChEBI" id="CHEBI:50058"/>
    </reaction>
</comment>
<comment type="subcellular location">
    <subcellularLocation>
        <location evidence="1">Cytoplasm</location>
    </subcellularLocation>
</comment>
<comment type="similarity">
    <text evidence="1">Belongs to the GlpE family.</text>
</comment>
<keyword id="KW-0963">Cytoplasm</keyword>
<keyword id="KW-0808">Transferase</keyword>